<keyword id="KW-0963">Cytoplasm</keyword>
<keyword id="KW-0251">Elongation factor</keyword>
<keyword id="KW-0342">GTP-binding</keyword>
<keyword id="KW-0547">Nucleotide-binding</keyword>
<keyword id="KW-0648">Protein biosynthesis</keyword>
<proteinExistence type="inferred from homology"/>
<name>EFG_CHLCH</name>
<dbReference type="EMBL" id="CP000108">
    <property type="protein sequence ID" value="ABB29105.1"/>
    <property type="molecule type" value="Genomic_DNA"/>
</dbReference>
<dbReference type="SMR" id="Q3APH0"/>
<dbReference type="STRING" id="340177.Cag_1854"/>
<dbReference type="KEGG" id="cch:Cag_1854"/>
<dbReference type="eggNOG" id="COG0480">
    <property type="taxonomic scope" value="Bacteria"/>
</dbReference>
<dbReference type="HOGENOM" id="CLU_002794_4_1_10"/>
<dbReference type="OrthoDB" id="9801591at2"/>
<dbReference type="GO" id="GO:0005737">
    <property type="term" value="C:cytoplasm"/>
    <property type="evidence" value="ECO:0007669"/>
    <property type="project" value="UniProtKB-SubCell"/>
</dbReference>
<dbReference type="GO" id="GO:0005525">
    <property type="term" value="F:GTP binding"/>
    <property type="evidence" value="ECO:0007669"/>
    <property type="project" value="UniProtKB-UniRule"/>
</dbReference>
<dbReference type="GO" id="GO:0003924">
    <property type="term" value="F:GTPase activity"/>
    <property type="evidence" value="ECO:0007669"/>
    <property type="project" value="InterPro"/>
</dbReference>
<dbReference type="GO" id="GO:0003746">
    <property type="term" value="F:translation elongation factor activity"/>
    <property type="evidence" value="ECO:0007669"/>
    <property type="project" value="UniProtKB-UniRule"/>
</dbReference>
<dbReference type="GO" id="GO:0032790">
    <property type="term" value="P:ribosome disassembly"/>
    <property type="evidence" value="ECO:0007669"/>
    <property type="project" value="TreeGrafter"/>
</dbReference>
<dbReference type="CDD" id="cd01886">
    <property type="entry name" value="EF-G"/>
    <property type="match status" value="1"/>
</dbReference>
<dbReference type="CDD" id="cd16262">
    <property type="entry name" value="EFG_III"/>
    <property type="match status" value="1"/>
</dbReference>
<dbReference type="CDD" id="cd01434">
    <property type="entry name" value="EFG_mtEFG1_IV"/>
    <property type="match status" value="1"/>
</dbReference>
<dbReference type="CDD" id="cd03713">
    <property type="entry name" value="EFG_mtEFG_C"/>
    <property type="match status" value="1"/>
</dbReference>
<dbReference type="CDD" id="cd04088">
    <property type="entry name" value="EFG_mtEFG_II"/>
    <property type="match status" value="1"/>
</dbReference>
<dbReference type="FunFam" id="2.40.30.10:FF:000006">
    <property type="entry name" value="Elongation factor G"/>
    <property type="match status" value="1"/>
</dbReference>
<dbReference type="FunFam" id="3.30.230.10:FF:000003">
    <property type="entry name" value="Elongation factor G"/>
    <property type="match status" value="1"/>
</dbReference>
<dbReference type="FunFam" id="3.30.70.240:FF:000001">
    <property type="entry name" value="Elongation factor G"/>
    <property type="match status" value="1"/>
</dbReference>
<dbReference type="FunFam" id="3.30.70.870:FF:000001">
    <property type="entry name" value="Elongation factor G"/>
    <property type="match status" value="1"/>
</dbReference>
<dbReference type="FunFam" id="3.40.50.300:FF:000029">
    <property type="entry name" value="Elongation factor G"/>
    <property type="match status" value="1"/>
</dbReference>
<dbReference type="Gene3D" id="3.30.230.10">
    <property type="match status" value="1"/>
</dbReference>
<dbReference type="Gene3D" id="3.30.70.240">
    <property type="match status" value="1"/>
</dbReference>
<dbReference type="Gene3D" id="3.30.70.870">
    <property type="entry name" value="Elongation Factor G (Translational Gtpase), domain 3"/>
    <property type="match status" value="1"/>
</dbReference>
<dbReference type="Gene3D" id="3.40.50.300">
    <property type="entry name" value="P-loop containing nucleotide triphosphate hydrolases"/>
    <property type="match status" value="1"/>
</dbReference>
<dbReference type="Gene3D" id="2.40.30.10">
    <property type="entry name" value="Translation factors"/>
    <property type="match status" value="1"/>
</dbReference>
<dbReference type="HAMAP" id="MF_00054_B">
    <property type="entry name" value="EF_G_EF_2_B"/>
    <property type="match status" value="1"/>
</dbReference>
<dbReference type="InterPro" id="IPR041095">
    <property type="entry name" value="EFG_II"/>
</dbReference>
<dbReference type="InterPro" id="IPR009022">
    <property type="entry name" value="EFG_III"/>
</dbReference>
<dbReference type="InterPro" id="IPR035647">
    <property type="entry name" value="EFG_III/V"/>
</dbReference>
<dbReference type="InterPro" id="IPR047872">
    <property type="entry name" value="EFG_IV"/>
</dbReference>
<dbReference type="InterPro" id="IPR035649">
    <property type="entry name" value="EFG_V"/>
</dbReference>
<dbReference type="InterPro" id="IPR000640">
    <property type="entry name" value="EFG_V-like"/>
</dbReference>
<dbReference type="InterPro" id="IPR004161">
    <property type="entry name" value="EFTu-like_2"/>
</dbReference>
<dbReference type="InterPro" id="IPR031157">
    <property type="entry name" value="G_TR_CS"/>
</dbReference>
<dbReference type="InterPro" id="IPR027417">
    <property type="entry name" value="P-loop_NTPase"/>
</dbReference>
<dbReference type="InterPro" id="IPR020568">
    <property type="entry name" value="Ribosomal_Su5_D2-typ_SF"/>
</dbReference>
<dbReference type="InterPro" id="IPR014721">
    <property type="entry name" value="Ribsml_uS5_D2-typ_fold_subgr"/>
</dbReference>
<dbReference type="InterPro" id="IPR005225">
    <property type="entry name" value="Small_GTP-bd"/>
</dbReference>
<dbReference type="InterPro" id="IPR000795">
    <property type="entry name" value="T_Tr_GTP-bd_dom"/>
</dbReference>
<dbReference type="InterPro" id="IPR009000">
    <property type="entry name" value="Transl_B-barrel_sf"/>
</dbReference>
<dbReference type="InterPro" id="IPR004540">
    <property type="entry name" value="Transl_elong_EFG/EF2"/>
</dbReference>
<dbReference type="InterPro" id="IPR005517">
    <property type="entry name" value="Transl_elong_EFG/EF2_IV"/>
</dbReference>
<dbReference type="NCBIfam" id="TIGR00484">
    <property type="entry name" value="EF-G"/>
    <property type="match status" value="1"/>
</dbReference>
<dbReference type="NCBIfam" id="NF009379">
    <property type="entry name" value="PRK12740.1-3"/>
    <property type="match status" value="1"/>
</dbReference>
<dbReference type="NCBIfam" id="NF009381">
    <property type="entry name" value="PRK12740.1-5"/>
    <property type="match status" value="1"/>
</dbReference>
<dbReference type="NCBIfam" id="TIGR00231">
    <property type="entry name" value="small_GTP"/>
    <property type="match status" value="1"/>
</dbReference>
<dbReference type="PANTHER" id="PTHR43261:SF1">
    <property type="entry name" value="RIBOSOME-RELEASING FACTOR 2, MITOCHONDRIAL"/>
    <property type="match status" value="1"/>
</dbReference>
<dbReference type="PANTHER" id="PTHR43261">
    <property type="entry name" value="TRANSLATION ELONGATION FACTOR G-RELATED"/>
    <property type="match status" value="1"/>
</dbReference>
<dbReference type="Pfam" id="PF00679">
    <property type="entry name" value="EFG_C"/>
    <property type="match status" value="1"/>
</dbReference>
<dbReference type="Pfam" id="PF14492">
    <property type="entry name" value="EFG_III"/>
    <property type="match status" value="1"/>
</dbReference>
<dbReference type="Pfam" id="PF03764">
    <property type="entry name" value="EFG_IV"/>
    <property type="match status" value="1"/>
</dbReference>
<dbReference type="Pfam" id="PF00009">
    <property type="entry name" value="GTP_EFTU"/>
    <property type="match status" value="1"/>
</dbReference>
<dbReference type="Pfam" id="PF03144">
    <property type="entry name" value="GTP_EFTU_D2"/>
    <property type="match status" value="1"/>
</dbReference>
<dbReference type="PRINTS" id="PR00315">
    <property type="entry name" value="ELONGATNFCT"/>
</dbReference>
<dbReference type="SMART" id="SM00838">
    <property type="entry name" value="EFG_C"/>
    <property type="match status" value="1"/>
</dbReference>
<dbReference type="SMART" id="SM00889">
    <property type="entry name" value="EFG_IV"/>
    <property type="match status" value="1"/>
</dbReference>
<dbReference type="SUPFAM" id="SSF54980">
    <property type="entry name" value="EF-G C-terminal domain-like"/>
    <property type="match status" value="2"/>
</dbReference>
<dbReference type="SUPFAM" id="SSF52540">
    <property type="entry name" value="P-loop containing nucleoside triphosphate hydrolases"/>
    <property type="match status" value="1"/>
</dbReference>
<dbReference type="SUPFAM" id="SSF54211">
    <property type="entry name" value="Ribosomal protein S5 domain 2-like"/>
    <property type="match status" value="1"/>
</dbReference>
<dbReference type="SUPFAM" id="SSF50447">
    <property type="entry name" value="Translation proteins"/>
    <property type="match status" value="1"/>
</dbReference>
<dbReference type="PROSITE" id="PS00301">
    <property type="entry name" value="G_TR_1"/>
    <property type="match status" value="1"/>
</dbReference>
<dbReference type="PROSITE" id="PS51722">
    <property type="entry name" value="G_TR_2"/>
    <property type="match status" value="1"/>
</dbReference>
<sequence length="704" mass="78050">MARLVALDRVRNIGIMAHIDAGKTTTTERILYYTGRLHRMGEVHDGGATMDWMEQEKERGITITSAATTCFWTPKFGNYQGINHRINIIDTPGHVDFTVEVERSLRVLDGAVALFCAVGGVEPQSETVWRQANKYGVPRIAYINKMDRTGANFFDAVKSIRERLGANPVPLQIPIGEGEMFAGFVDLIRMKGIIYDKEDGSTYQEVEIPHDLQNEAKAWRINMLEAVSEHDDTLLEKYLNGEDITDEEVRKVLRQATLQVTIIPILCGSSFKNKGVQFMLDAVIEYLASPVDVPAVEGHHPRTEEPISRKPTDEEPFAALAFKIATDPFVGKLTFFRVYSGVLKAGSYVLNTITGKKERVGRVLQMHSNKREDIEAVYCGDIAAAVGLKDVKTGDTLCDENNPVVLEKMVFPEPVIQIAIEPKTKSDSDKLGMSLAKLAEEDPTFKVKTDEETGQTLIAGMGELHLEILVDRLRREFKVDANVGKPQVAYRETIRKSVEFEGKFVRQSGGKGQFGLVNLKVEPLEEGKGYEFVDAIKGGVIPREYIPAVNAGIQEAMKGGVVAGFPMQDVRVTLFDGKYHEVDSSEMAFKIAGSIGFKGAAKKADPVLLEPIMKVEVVTPEEYLGDVMGDLSSRRGHIEGMGQRAGAQFVAAKVPLSSMFGYSTDLRSMSQGRANYSMEFECYREVPRNIAESLQEKRTSKDAE</sequence>
<feature type="chain" id="PRO_0000225203" description="Elongation factor G">
    <location>
        <begin position="1"/>
        <end position="704"/>
    </location>
</feature>
<feature type="domain" description="tr-type G">
    <location>
        <begin position="8"/>
        <end position="291"/>
    </location>
</feature>
<feature type="binding site" evidence="1">
    <location>
        <begin position="17"/>
        <end position="24"/>
    </location>
    <ligand>
        <name>GTP</name>
        <dbReference type="ChEBI" id="CHEBI:37565"/>
    </ligand>
</feature>
<feature type="binding site" evidence="1">
    <location>
        <begin position="90"/>
        <end position="94"/>
    </location>
    <ligand>
        <name>GTP</name>
        <dbReference type="ChEBI" id="CHEBI:37565"/>
    </ligand>
</feature>
<feature type="binding site" evidence="1">
    <location>
        <begin position="144"/>
        <end position="147"/>
    </location>
    <ligand>
        <name>GTP</name>
        <dbReference type="ChEBI" id="CHEBI:37565"/>
    </ligand>
</feature>
<gene>
    <name evidence="1" type="primary">fusA</name>
    <name type="ordered locus">Cag_1854</name>
</gene>
<organism>
    <name type="scientific">Chlorobium chlorochromatii (strain CaD3)</name>
    <dbReference type="NCBI Taxonomy" id="340177"/>
    <lineage>
        <taxon>Bacteria</taxon>
        <taxon>Pseudomonadati</taxon>
        <taxon>Chlorobiota</taxon>
        <taxon>Chlorobiia</taxon>
        <taxon>Chlorobiales</taxon>
        <taxon>Chlorobiaceae</taxon>
        <taxon>Chlorobium/Pelodictyon group</taxon>
        <taxon>Chlorobium</taxon>
    </lineage>
</organism>
<reference key="1">
    <citation type="submission" date="2005-08" db="EMBL/GenBank/DDBJ databases">
        <title>Complete sequence of Chlorobium chlorochromatii CaD3.</title>
        <authorList>
            <consortium name="US DOE Joint Genome Institute"/>
            <person name="Copeland A."/>
            <person name="Lucas S."/>
            <person name="Lapidus A."/>
            <person name="Barry K."/>
            <person name="Detter J.C."/>
            <person name="Glavina T."/>
            <person name="Hammon N."/>
            <person name="Israni S."/>
            <person name="Pitluck S."/>
            <person name="Bryant D."/>
            <person name="Schmutz J."/>
            <person name="Larimer F."/>
            <person name="Land M."/>
            <person name="Kyrpides N."/>
            <person name="Ivanova N."/>
            <person name="Richardson P."/>
        </authorList>
    </citation>
    <scope>NUCLEOTIDE SEQUENCE [LARGE SCALE GENOMIC DNA]</scope>
    <source>
        <strain>CaD3</strain>
    </source>
</reference>
<accession>Q3APH0</accession>
<comment type="function">
    <text evidence="1">Catalyzes the GTP-dependent ribosomal translocation step during translation elongation. During this step, the ribosome changes from the pre-translocational (PRE) to the post-translocational (POST) state as the newly formed A-site-bound peptidyl-tRNA and P-site-bound deacylated tRNA move to the P and E sites, respectively. Catalyzes the coordinated movement of the two tRNA molecules, the mRNA and conformational changes in the ribosome.</text>
</comment>
<comment type="subcellular location">
    <subcellularLocation>
        <location evidence="1">Cytoplasm</location>
    </subcellularLocation>
</comment>
<comment type="similarity">
    <text evidence="1">Belongs to the TRAFAC class translation factor GTPase superfamily. Classic translation factor GTPase family. EF-G/EF-2 subfamily.</text>
</comment>
<evidence type="ECO:0000255" key="1">
    <source>
        <dbReference type="HAMAP-Rule" id="MF_00054"/>
    </source>
</evidence>
<protein>
    <recommendedName>
        <fullName evidence="1">Elongation factor G</fullName>
        <shortName evidence="1">EF-G</shortName>
    </recommendedName>
</protein>